<evidence type="ECO:0000255" key="1">
    <source>
        <dbReference type="HAMAP-Rule" id="MF_00332"/>
    </source>
</evidence>
<evidence type="ECO:0000256" key="2">
    <source>
        <dbReference type="SAM" id="MobiDB-lite"/>
    </source>
</evidence>
<name>DNAK_BART1</name>
<organism>
    <name type="scientific">Bartonella tribocorum (strain CIP 105476 / IBS 506)</name>
    <dbReference type="NCBI Taxonomy" id="382640"/>
    <lineage>
        <taxon>Bacteria</taxon>
        <taxon>Pseudomonadati</taxon>
        <taxon>Pseudomonadota</taxon>
        <taxon>Alphaproteobacteria</taxon>
        <taxon>Hyphomicrobiales</taxon>
        <taxon>Bartonellaceae</taxon>
        <taxon>Bartonella</taxon>
    </lineage>
</organism>
<sequence length="630" mass="68092">MAKVIGIDLGTTNSCVAVMDGKNAKVIENSEGARTTPSVVAFTDGGERLVGQPAKRQAVTNPEGTVFAVKRLIGRRFDDPMVEKDKALVPYKIVKGDNGDAWVEEAGKKYSPSQISAMILQKMKETAESYLGEKVEQAVITVPAYFNDAQRQATKDAGKIAGLEVLRIINEPTAAALAYGLDKKDGKTIAVYDLGGGTFDISVLEIGDGVFEVKSTNGDTFLGGEDFDMRLVGYFADEFKKEQGIDLKNDKLALQRLKEAAEKAKIELSSSQQTEINLPFITADQSGPKHLTMKLTRAKFESLVDDLVQRTIEPCKAALKDAGLKAGEIDEVVLVGGMTRMPKIQQVVQNFFGKDPHKGVNPDEVVAMGAAIQGGVLQGDVKDVLLLDVTPLSLGIETLGGVFTRLIERNTTIPTKKSQVFSTADDNQSAVTIRVFQGEREMASDNKLLAQFDLVGIPPAPRGIPQIEVTFDIDANGIVNVSAKDKGTGKEHQIRIQASGGLSDADIEKMVKDAEEHAAEDKKRREGVEAKNQAEALIHSTEKSLNEYGDKVSVEEKGQIEAAISDLKSALEGSDTEEVTTKMQKLAEVSMKLGQAMYESSQAASADTETETKDDDVVDADFEEVNDKKK</sequence>
<protein>
    <recommendedName>
        <fullName evidence="1">Chaperone protein DnaK</fullName>
    </recommendedName>
    <alternativeName>
        <fullName evidence="1">HSP70</fullName>
    </alternativeName>
    <alternativeName>
        <fullName evidence="1">Heat shock 70 kDa protein</fullName>
    </alternativeName>
    <alternativeName>
        <fullName evidence="1">Heat shock protein 70</fullName>
    </alternativeName>
</protein>
<keyword id="KW-0067">ATP-binding</keyword>
<keyword id="KW-0143">Chaperone</keyword>
<keyword id="KW-0547">Nucleotide-binding</keyword>
<keyword id="KW-0597">Phosphoprotein</keyword>
<keyword id="KW-0346">Stress response</keyword>
<proteinExistence type="inferred from homology"/>
<accession>A9ILH7</accession>
<reference key="1">
    <citation type="journal article" date="2007" name="Nat. Genet.">
        <title>Genomic analysis of Bartonella identifies type IV secretion systems as host adaptability factors.</title>
        <authorList>
            <person name="Saenz H.L."/>
            <person name="Engel P."/>
            <person name="Stoeckli M.C."/>
            <person name="Lanz C."/>
            <person name="Raddatz G."/>
            <person name="Vayssier-Taussat M."/>
            <person name="Birtles R."/>
            <person name="Schuster S.C."/>
            <person name="Dehio C."/>
        </authorList>
    </citation>
    <scope>NUCLEOTIDE SEQUENCE [LARGE SCALE GENOMIC DNA]</scope>
    <source>
        <strain>CIP 105476 / IBS 506</strain>
    </source>
</reference>
<feature type="chain" id="PRO_1000079216" description="Chaperone protein DnaK">
    <location>
        <begin position="1"/>
        <end position="630"/>
    </location>
</feature>
<feature type="region of interest" description="Disordered" evidence="2">
    <location>
        <begin position="598"/>
        <end position="630"/>
    </location>
</feature>
<feature type="compositionally biased region" description="Acidic residues" evidence="2">
    <location>
        <begin position="608"/>
        <end position="624"/>
    </location>
</feature>
<feature type="modified residue" description="Phosphothreonine; by autocatalysis" evidence="1">
    <location>
        <position position="198"/>
    </location>
</feature>
<dbReference type="EMBL" id="AM260525">
    <property type="protein sequence ID" value="CAK00566.1"/>
    <property type="molecule type" value="Genomic_DNA"/>
</dbReference>
<dbReference type="RefSeq" id="WP_012230375.1">
    <property type="nucleotide sequence ID" value="NC_010161.1"/>
</dbReference>
<dbReference type="SMR" id="A9ILH7"/>
<dbReference type="KEGG" id="btr:BT_0065"/>
<dbReference type="eggNOG" id="COG0443">
    <property type="taxonomic scope" value="Bacteria"/>
</dbReference>
<dbReference type="HOGENOM" id="CLU_005965_2_1_5"/>
<dbReference type="Proteomes" id="UP000001592">
    <property type="component" value="Chromosome"/>
</dbReference>
<dbReference type="GO" id="GO:0005524">
    <property type="term" value="F:ATP binding"/>
    <property type="evidence" value="ECO:0007669"/>
    <property type="project" value="UniProtKB-UniRule"/>
</dbReference>
<dbReference type="GO" id="GO:0140662">
    <property type="term" value="F:ATP-dependent protein folding chaperone"/>
    <property type="evidence" value="ECO:0007669"/>
    <property type="project" value="InterPro"/>
</dbReference>
<dbReference type="GO" id="GO:0051082">
    <property type="term" value="F:unfolded protein binding"/>
    <property type="evidence" value="ECO:0007669"/>
    <property type="project" value="InterPro"/>
</dbReference>
<dbReference type="CDD" id="cd11733">
    <property type="entry name" value="ASKHA_NBD_HSP70_HSPA9"/>
    <property type="match status" value="1"/>
</dbReference>
<dbReference type="FunFam" id="2.60.34.10:FF:000014">
    <property type="entry name" value="Chaperone protein DnaK HSP70"/>
    <property type="match status" value="1"/>
</dbReference>
<dbReference type="FunFam" id="1.20.1270.10:FF:000001">
    <property type="entry name" value="Molecular chaperone DnaK"/>
    <property type="match status" value="1"/>
</dbReference>
<dbReference type="FunFam" id="3.30.420.40:FF:000004">
    <property type="entry name" value="Molecular chaperone DnaK"/>
    <property type="match status" value="1"/>
</dbReference>
<dbReference type="FunFam" id="3.90.640.10:FF:000003">
    <property type="entry name" value="Molecular chaperone DnaK"/>
    <property type="match status" value="1"/>
</dbReference>
<dbReference type="Gene3D" id="1.20.1270.10">
    <property type="match status" value="1"/>
</dbReference>
<dbReference type="Gene3D" id="3.30.420.40">
    <property type="match status" value="2"/>
</dbReference>
<dbReference type="Gene3D" id="3.90.640.10">
    <property type="entry name" value="Actin, Chain A, domain 4"/>
    <property type="match status" value="1"/>
</dbReference>
<dbReference type="Gene3D" id="2.60.34.10">
    <property type="entry name" value="Substrate Binding Domain Of DNAk, Chain A, domain 1"/>
    <property type="match status" value="1"/>
</dbReference>
<dbReference type="HAMAP" id="MF_00332">
    <property type="entry name" value="DnaK"/>
    <property type="match status" value="1"/>
</dbReference>
<dbReference type="InterPro" id="IPR043129">
    <property type="entry name" value="ATPase_NBD"/>
</dbReference>
<dbReference type="InterPro" id="IPR012725">
    <property type="entry name" value="Chaperone_DnaK"/>
</dbReference>
<dbReference type="InterPro" id="IPR018181">
    <property type="entry name" value="Heat_shock_70_CS"/>
</dbReference>
<dbReference type="InterPro" id="IPR029048">
    <property type="entry name" value="HSP70_C_sf"/>
</dbReference>
<dbReference type="InterPro" id="IPR029047">
    <property type="entry name" value="HSP70_peptide-bd_sf"/>
</dbReference>
<dbReference type="InterPro" id="IPR013126">
    <property type="entry name" value="Hsp_70_fam"/>
</dbReference>
<dbReference type="NCBIfam" id="NF001413">
    <property type="entry name" value="PRK00290.1"/>
    <property type="match status" value="1"/>
</dbReference>
<dbReference type="NCBIfam" id="NF003520">
    <property type="entry name" value="PRK05183.1"/>
    <property type="match status" value="1"/>
</dbReference>
<dbReference type="NCBIfam" id="TIGR02350">
    <property type="entry name" value="prok_dnaK"/>
    <property type="match status" value="1"/>
</dbReference>
<dbReference type="PANTHER" id="PTHR19375">
    <property type="entry name" value="HEAT SHOCK PROTEIN 70KDA"/>
    <property type="match status" value="1"/>
</dbReference>
<dbReference type="Pfam" id="PF00012">
    <property type="entry name" value="HSP70"/>
    <property type="match status" value="1"/>
</dbReference>
<dbReference type="PRINTS" id="PR00301">
    <property type="entry name" value="HEATSHOCK70"/>
</dbReference>
<dbReference type="SUPFAM" id="SSF53067">
    <property type="entry name" value="Actin-like ATPase domain"/>
    <property type="match status" value="2"/>
</dbReference>
<dbReference type="SUPFAM" id="SSF100934">
    <property type="entry name" value="Heat shock protein 70kD (HSP70), C-terminal subdomain"/>
    <property type="match status" value="1"/>
</dbReference>
<dbReference type="SUPFAM" id="SSF100920">
    <property type="entry name" value="Heat shock protein 70kD (HSP70), peptide-binding domain"/>
    <property type="match status" value="1"/>
</dbReference>
<dbReference type="PROSITE" id="PS00297">
    <property type="entry name" value="HSP70_1"/>
    <property type="match status" value="1"/>
</dbReference>
<dbReference type="PROSITE" id="PS00329">
    <property type="entry name" value="HSP70_2"/>
    <property type="match status" value="1"/>
</dbReference>
<dbReference type="PROSITE" id="PS01036">
    <property type="entry name" value="HSP70_3"/>
    <property type="match status" value="1"/>
</dbReference>
<comment type="function">
    <text evidence="1">Acts as a chaperone.</text>
</comment>
<comment type="induction">
    <text evidence="1">By stress conditions e.g. heat shock.</text>
</comment>
<comment type="similarity">
    <text evidence="1">Belongs to the heat shock protein 70 family.</text>
</comment>
<gene>
    <name evidence="1" type="primary">dnaK</name>
    <name type="ordered locus">BT_0065</name>
</gene>